<protein>
    <recommendedName>
        <fullName evidence="1">ATP synthase subunit beta 1</fullName>
        <ecNumber evidence="1">7.1.2.2</ecNumber>
    </recommendedName>
    <alternativeName>
        <fullName evidence="1">ATP synthase F1 sector subunit beta 1</fullName>
    </alternativeName>
    <alternativeName>
        <fullName evidence="1">F-ATPase subunit beta 1</fullName>
    </alternativeName>
</protein>
<feature type="chain" id="PRO_0000254325" description="ATP synthase subunit beta 1">
    <location>
        <begin position="1"/>
        <end position="468"/>
    </location>
</feature>
<feature type="binding site" evidence="1">
    <location>
        <begin position="155"/>
        <end position="162"/>
    </location>
    <ligand>
        <name>ATP</name>
        <dbReference type="ChEBI" id="CHEBI:30616"/>
    </ligand>
</feature>
<proteinExistence type="inferred from homology"/>
<reference key="1">
    <citation type="submission" date="2005-10" db="EMBL/GenBank/DDBJ databases">
        <title>Complete sequence of Pelobacter carbinolicus DSM 2380.</title>
        <authorList>
            <person name="Copeland A."/>
            <person name="Lucas S."/>
            <person name="Lapidus A."/>
            <person name="Barry K."/>
            <person name="Detter J.C."/>
            <person name="Glavina T."/>
            <person name="Hammon N."/>
            <person name="Israni S."/>
            <person name="Pitluck S."/>
            <person name="Chertkov O."/>
            <person name="Schmutz J."/>
            <person name="Larimer F."/>
            <person name="Land M."/>
            <person name="Kyrpides N."/>
            <person name="Ivanova N."/>
            <person name="Richardson P."/>
        </authorList>
    </citation>
    <scope>NUCLEOTIDE SEQUENCE [LARGE SCALE GENOMIC DNA]</scope>
    <source>
        <strain>DSM 2380 / NBRC 103641 / GraBd1</strain>
    </source>
</reference>
<organism>
    <name type="scientific">Syntrophotalea carbinolica (strain DSM 2380 / NBRC 103641 / GraBd1)</name>
    <name type="common">Pelobacter carbinolicus</name>
    <dbReference type="NCBI Taxonomy" id="338963"/>
    <lineage>
        <taxon>Bacteria</taxon>
        <taxon>Pseudomonadati</taxon>
        <taxon>Thermodesulfobacteriota</taxon>
        <taxon>Desulfuromonadia</taxon>
        <taxon>Desulfuromonadales</taxon>
        <taxon>Syntrophotaleaceae</taxon>
        <taxon>Syntrophotalea</taxon>
    </lineage>
</organism>
<sequence length="468" mass="51102">MSNGKITQVIGPVIDVEFEAGELPEIYYALKVSNPSLGDEPWNLVAEVAQHLGENTVRAIAMDSTDGLVRGQEVLNTGRQISVPVGRGTLGRILNVIGEPVDEQGPVETDTTWEIHRPTPEFVDQSTKVEAFETGIKVVDLLAPYARGGKIGLFGGAGVGKTVLIMELIHNIAKKHGGFSVFAGVGERTREGNDLWNEMKESNVLDKTALVYGQMNEPPGARARVALSALTVAEYFRDQENQDVLLFVDNIFRFTQAGSEVSALLGRIPSAVGYQPTLSTEMGELQERITTTKNGSITSVQAIYVPADDLTDPAPATTFAHLDATTVLSRQIAELGIYPAVDPLDSSSRILDPQVLGEEHYQVARDVQYVLQRYKDLQDIIAILGMDELSEEDKQTVSRARKIQRFLSQPFHVAEIFTGTPGKYVELSETIRGFKEIVEGKHDSVPEQAFYMAGGIDEVLENAAKMAS</sequence>
<name>ATPB1_SYNC1</name>
<comment type="function">
    <text evidence="1">Produces ATP from ADP in the presence of a proton gradient across the membrane. The catalytic sites are hosted primarily by the beta subunits.</text>
</comment>
<comment type="catalytic activity">
    <reaction evidence="1">
        <text>ATP + H2O + 4 H(+)(in) = ADP + phosphate + 5 H(+)(out)</text>
        <dbReference type="Rhea" id="RHEA:57720"/>
        <dbReference type="ChEBI" id="CHEBI:15377"/>
        <dbReference type="ChEBI" id="CHEBI:15378"/>
        <dbReference type="ChEBI" id="CHEBI:30616"/>
        <dbReference type="ChEBI" id="CHEBI:43474"/>
        <dbReference type="ChEBI" id="CHEBI:456216"/>
        <dbReference type="EC" id="7.1.2.2"/>
    </reaction>
</comment>
<comment type="subunit">
    <text evidence="1">F-type ATPases have 2 components, CF(1) - the catalytic core - and CF(0) - the membrane proton channel. CF(1) has five subunits: alpha(3), beta(3), gamma(1), delta(1), epsilon(1). CF(0) has three main subunits: a(1), b(2) and c(9-12). The alpha and beta chains form an alternating ring which encloses part of the gamma chain. CF(1) is attached to CF(0) by a central stalk formed by the gamma and epsilon chains, while a peripheral stalk is formed by the delta and b chains.</text>
</comment>
<comment type="subcellular location">
    <subcellularLocation>
        <location evidence="1">Cell inner membrane</location>
        <topology evidence="1">Peripheral membrane protein</topology>
    </subcellularLocation>
</comment>
<comment type="similarity">
    <text evidence="1">Belongs to the ATPase alpha/beta chains family.</text>
</comment>
<accession>Q3A605</accession>
<evidence type="ECO:0000255" key="1">
    <source>
        <dbReference type="HAMAP-Rule" id="MF_01347"/>
    </source>
</evidence>
<keyword id="KW-0066">ATP synthesis</keyword>
<keyword id="KW-0067">ATP-binding</keyword>
<keyword id="KW-0997">Cell inner membrane</keyword>
<keyword id="KW-1003">Cell membrane</keyword>
<keyword id="KW-0139">CF(1)</keyword>
<keyword id="KW-0375">Hydrogen ion transport</keyword>
<keyword id="KW-0406">Ion transport</keyword>
<keyword id="KW-0472">Membrane</keyword>
<keyword id="KW-0547">Nucleotide-binding</keyword>
<keyword id="KW-1185">Reference proteome</keyword>
<keyword id="KW-1278">Translocase</keyword>
<keyword id="KW-0813">Transport</keyword>
<dbReference type="EC" id="7.1.2.2" evidence="1"/>
<dbReference type="EMBL" id="CP000142">
    <property type="protein sequence ID" value="ABA88202.1"/>
    <property type="molecule type" value="Genomic_DNA"/>
</dbReference>
<dbReference type="RefSeq" id="WP_011340673.1">
    <property type="nucleotide sequence ID" value="NC_007498.2"/>
</dbReference>
<dbReference type="SMR" id="Q3A605"/>
<dbReference type="STRING" id="338963.Pcar_0949"/>
<dbReference type="KEGG" id="pca:Pcar_0949"/>
<dbReference type="eggNOG" id="COG0055">
    <property type="taxonomic scope" value="Bacteria"/>
</dbReference>
<dbReference type="HOGENOM" id="CLU_022398_0_2_7"/>
<dbReference type="OrthoDB" id="9801639at2"/>
<dbReference type="Proteomes" id="UP000002534">
    <property type="component" value="Chromosome"/>
</dbReference>
<dbReference type="GO" id="GO:0005886">
    <property type="term" value="C:plasma membrane"/>
    <property type="evidence" value="ECO:0007669"/>
    <property type="project" value="UniProtKB-SubCell"/>
</dbReference>
<dbReference type="GO" id="GO:0045259">
    <property type="term" value="C:proton-transporting ATP synthase complex"/>
    <property type="evidence" value="ECO:0007669"/>
    <property type="project" value="UniProtKB-KW"/>
</dbReference>
<dbReference type="GO" id="GO:0005524">
    <property type="term" value="F:ATP binding"/>
    <property type="evidence" value="ECO:0007669"/>
    <property type="project" value="UniProtKB-UniRule"/>
</dbReference>
<dbReference type="GO" id="GO:0016887">
    <property type="term" value="F:ATP hydrolysis activity"/>
    <property type="evidence" value="ECO:0007669"/>
    <property type="project" value="InterPro"/>
</dbReference>
<dbReference type="GO" id="GO:0046933">
    <property type="term" value="F:proton-transporting ATP synthase activity, rotational mechanism"/>
    <property type="evidence" value="ECO:0007669"/>
    <property type="project" value="UniProtKB-UniRule"/>
</dbReference>
<dbReference type="CDD" id="cd18110">
    <property type="entry name" value="ATP-synt_F1_beta_C"/>
    <property type="match status" value="1"/>
</dbReference>
<dbReference type="CDD" id="cd18115">
    <property type="entry name" value="ATP-synt_F1_beta_N"/>
    <property type="match status" value="1"/>
</dbReference>
<dbReference type="CDD" id="cd01133">
    <property type="entry name" value="F1-ATPase_beta_CD"/>
    <property type="match status" value="1"/>
</dbReference>
<dbReference type="FunFam" id="1.10.1140.10:FF:000001">
    <property type="entry name" value="ATP synthase subunit beta"/>
    <property type="match status" value="1"/>
</dbReference>
<dbReference type="FunFam" id="2.40.10.170:FF:000005">
    <property type="entry name" value="ATP synthase subunit beta"/>
    <property type="match status" value="1"/>
</dbReference>
<dbReference type="FunFam" id="3.40.50.300:FF:000026">
    <property type="entry name" value="ATP synthase subunit beta"/>
    <property type="match status" value="1"/>
</dbReference>
<dbReference type="Gene3D" id="2.40.10.170">
    <property type="match status" value="1"/>
</dbReference>
<dbReference type="Gene3D" id="1.10.1140.10">
    <property type="entry name" value="Bovine Mitochondrial F1-atpase, Atp Synthase Beta Chain, Chain D, domain 3"/>
    <property type="match status" value="1"/>
</dbReference>
<dbReference type="Gene3D" id="3.40.50.300">
    <property type="entry name" value="P-loop containing nucleotide triphosphate hydrolases"/>
    <property type="match status" value="1"/>
</dbReference>
<dbReference type="HAMAP" id="MF_01347">
    <property type="entry name" value="ATP_synth_beta_bact"/>
    <property type="match status" value="1"/>
</dbReference>
<dbReference type="InterPro" id="IPR003593">
    <property type="entry name" value="AAA+_ATPase"/>
</dbReference>
<dbReference type="InterPro" id="IPR055190">
    <property type="entry name" value="ATP-synt_VA_C"/>
</dbReference>
<dbReference type="InterPro" id="IPR005722">
    <property type="entry name" value="ATP_synth_F1_bsu"/>
</dbReference>
<dbReference type="InterPro" id="IPR020003">
    <property type="entry name" value="ATPase_a/bsu_AS"/>
</dbReference>
<dbReference type="InterPro" id="IPR050053">
    <property type="entry name" value="ATPase_alpha/beta_chains"/>
</dbReference>
<dbReference type="InterPro" id="IPR004100">
    <property type="entry name" value="ATPase_F1/V1/A1_a/bsu_N"/>
</dbReference>
<dbReference type="InterPro" id="IPR036121">
    <property type="entry name" value="ATPase_F1/V1/A1_a/bsu_N_sf"/>
</dbReference>
<dbReference type="InterPro" id="IPR000194">
    <property type="entry name" value="ATPase_F1/V1/A1_a/bsu_nucl-bd"/>
</dbReference>
<dbReference type="InterPro" id="IPR024034">
    <property type="entry name" value="ATPase_F1/V1_b/a_C"/>
</dbReference>
<dbReference type="InterPro" id="IPR027417">
    <property type="entry name" value="P-loop_NTPase"/>
</dbReference>
<dbReference type="NCBIfam" id="TIGR01039">
    <property type="entry name" value="atpD"/>
    <property type="match status" value="1"/>
</dbReference>
<dbReference type="PANTHER" id="PTHR15184">
    <property type="entry name" value="ATP SYNTHASE"/>
    <property type="match status" value="1"/>
</dbReference>
<dbReference type="PANTHER" id="PTHR15184:SF71">
    <property type="entry name" value="ATP SYNTHASE SUBUNIT BETA, MITOCHONDRIAL"/>
    <property type="match status" value="1"/>
</dbReference>
<dbReference type="Pfam" id="PF00006">
    <property type="entry name" value="ATP-synt_ab"/>
    <property type="match status" value="1"/>
</dbReference>
<dbReference type="Pfam" id="PF02874">
    <property type="entry name" value="ATP-synt_ab_N"/>
    <property type="match status" value="1"/>
</dbReference>
<dbReference type="Pfam" id="PF22919">
    <property type="entry name" value="ATP-synt_VA_C"/>
    <property type="match status" value="1"/>
</dbReference>
<dbReference type="PIRSF" id="PIRSF039072">
    <property type="entry name" value="ATPase_subunit_beta"/>
    <property type="match status" value="1"/>
</dbReference>
<dbReference type="SMART" id="SM00382">
    <property type="entry name" value="AAA"/>
    <property type="match status" value="1"/>
</dbReference>
<dbReference type="SUPFAM" id="SSF47917">
    <property type="entry name" value="C-terminal domain of alpha and beta subunits of F1 ATP synthase"/>
    <property type="match status" value="1"/>
</dbReference>
<dbReference type="SUPFAM" id="SSF50615">
    <property type="entry name" value="N-terminal domain of alpha and beta subunits of F1 ATP synthase"/>
    <property type="match status" value="1"/>
</dbReference>
<dbReference type="SUPFAM" id="SSF52540">
    <property type="entry name" value="P-loop containing nucleoside triphosphate hydrolases"/>
    <property type="match status" value="1"/>
</dbReference>
<dbReference type="PROSITE" id="PS00152">
    <property type="entry name" value="ATPASE_ALPHA_BETA"/>
    <property type="match status" value="1"/>
</dbReference>
<gene>
    <name evidence="1" type="primary">atpD1</name>
    <name type="ordered locus">Pcar_0949</name>
</gene>